<sequence>MPLFKSRIKSALVHRREQGLTRQLKVLENSNGPLLTSEGSSFINFSSNDYLGLANDSELVDAWQVGLSQYGAGSAASPLVTGFSPAHRNLETQLCEWLGFERAILFNSGFSANQALLFSLLEKDDFLLQDKLNHASLMEAGMLSPATMKRFKHNDTQHLESLLSQTPQSLVVTEGVFSMDGDQAPLRQISSLTNQYDSWLAVDDAHGIGVLGDNGAGSCNAAQISPDILVVTFGKAFGLSGAAILCSSEVGDYLTQFARHHVYSTAMPPSQAVALSHACQMIQTQEWRREKLTELGALYAEQMNGVKGFIDTQTPIKPFLIGEAQAALSIAEELKRNQVWVTAIRSPTVPIGTARLRITLTANHSQEQILQLTDSLLQAIERSNDSGSKPSIESSFELKKEAQ</sequence>
<protein>
    <recommendedName>
        <fullName evidence="1">8-amino-7-oxononanoate synthase</fullName>
        <shortName evidence="1">AONS</shortName>
        <ecNumber evidence="1">2.3.1.47</ecNumber>
    </recommendedName>
    <alternativeName>
        <fullName evidence="1">7-keto-8-amino-pelargonic acid synthase</fullName>
        <shortName evidence="1">7-KAP synthase</shortName>
        <shortName evidence="1">KAPA synthase</shortName>
    </alternativeName>
    <alternativeName>
        <fullName evidence="1">8-amino-7-ketopelargonate synthase</fullName>
    </alternativeName>
</protein>
<comment type="function">
    <text evidence="1">Catalyzes the decarboxylative condensation of pimeloyl-[acyl-carrier protein] and L-alanine to produce 8-amino-7-oxononanoate (AON), [acyl-carrier protein], and carbon dioxide.</text>
</comment>
<comment type="catalytic activity">
    <reaction evidence="1">
        <text>6-carboxyhexanoyl-[ACP] + L-alanine + H(+) = (8S)-8-amino-7-oxononanoate + holo-[ACP] + CO2</text>
        <dbReference type="Rhea" id="RHEA:42288"/>
        <dbReference type="Rhea" id="RHEA-COMP:9685"/>
        <dbReference type="Rhea" id="RHEA-COMP:9955"/>
        <dbReference type="ChEBI" id="CHEBI:15378"/>
        <dbReference type="ChEBI" id="CHEBI:16526"/>
        <dbReference type="ChEBI" id="CHEBI:57972"/>
        <dbReference type="ChEBI" id="CHEBI:64479"/>
        <dbReference type="ChEBI" id="CHEBI:78846"/>
        <dbReference type="ChEBI" id="CHEBI:149468"/>
        <dbReference type="EC" id="2.3.1.47"/>
    </reaction>
</comment>
<comment type="cofactor">
    <cofactor evidence="1">
        <name>pyridoxal 5'-phosphate</name>
        <dbReference type="ChEBI" id="CHEBI:597326"/>
    </cofactor>
</comment>
<comment type="pathway">
    <text evidence="1">Cofactor biosynthesis; biotin biosynthesis.</text>
</comment>
<comment type="subunit">
    <text evidence="1">Homodimer.</text>
</comment>
<comment type="similarity">
    <text evidence="1">Belongs to the class-II pyridoxal-phosphate-dependent aminotransferase family. BioF subfamily.</text>
</comment>
<comment type="sequence caution" evidence="3">
    <conflict type="erroneous initiation">
        <sequence resource="EMBL-CDS" id="CAV19215"/>
    </conflict>
</comment>
<organism>
    <name type="scientific">Vibrio atlanticus (strain LGP32)</name>
    <name type="common">Vibrio splendidus (strain Mel32)</name>
    <dbReference type="NCBI Taxonomy" id="575788"/>
    <lineage>
        <taxon>Bacteria</taxon>
        <taxon>Pseudomonadati</taxon>
        <taxon>Pseudomonadota</taxon>
        <taxon>Gammaproteobacteria</taxon>
        <taxon>Vibrionales</taxon>
        <taxon>Vibrionaceae</taxon>
        <taxon>Vibrio</taxon>
    </lineage>
</organism>
<accession>B7VH15</accession>
<evidence type="ECO:0000255" key="1">
    <source>
        <dbReference type="HAMAP-Rule" id="MF_01693"/>
    </source>
</evidence>
<evidence type="ECO:0000256" key="2">
    <source>
        <dbReference type="SAM" id="MobiDB-lite"/>
    </source>
</evidence>
<evidence type="ECO:0000305" key="3"/>
<dbReference type="EC" id="2.3.1.47" evidence="1"/>
<dbReference type="EMBL" id="FM954972">
    <property type="protein sequence ID" value="CAV19215.1"/>
    <property type="status" value="ALT_INIT"/>
    <property type="molecule type" value="Genomic_DNA"/>
</dbReference>
<dbReference type="SMR" id="B7VH15"/>
<dbReference type="STRING" id="575788.VS_2039"/>
<dbReference type="KEGG" id="vsp:VS_2039"/>
<dbReference type="PATRIC" id="fig|575788.5.peg.3317"/>
<dbReference type="eggNOG" id="COG0156">
    <property type="taxonomic scope" value="Bacteria"/>
</dbReference>
<dbReference type="HOGENOM" id="CLU_015846_11_2_6"/>
<dbReference type="UniPathway" id="UPA00078"/>
<dbReference type="Proteomes" id="UP000009100">
    <property type="component" value="Chromosome 1"/>
</dbReference>
<dbReference type="GO" id="GO:0008710">
    <property type="term" value="F:8-amino-7-oxononanoate synthase activity"/>
    <property type="evidence" value="ECO:0007669"/>
    <property type="project" value="UniProtKB-UniRule"/>
</dbReference>
<dbReference type="GO" id="GO:0030170">
    <property type="term" value="F:pyridoxal phosphate binding"/>
    <property type="evidence" value="ECO:0007669"/>
    <property type="project" value="UniProtKB-UniRule"/>
</dbReference>
<dbReference type="GO" id="GO:0009102">
    <property type="term" value="P:biotin biosynthetic process"/>
    <property type="evidence" value="ECO:0007669"/>
    <property type="project" value="UniProtKB-UniRule"/>
</dbReference>
<dbReference type="CDD" id="cd06454">
    <property type="entry name" value="KBL_like"/>
    <property type="match status" value="1"/>
</dbReference>
<dbReference type="Gene3D" id="3.90.1150.10">
    <property type="entry name" value="Aspartate Aminotransferase, domain 1"/>
    <property type="match status" value="1"/>
</dbReference>
<dbReference type="Gene3D" id="3.40.640.10">
    <property type="entry name" value="Type I PLP-dependent aspartate aminotransferase-like (Major domain)"/>
    <property type="match status" value="1"/>
</dbReference>
<dbReference type="HAMAP" id="MF_01693">
    <property type="entry name" value="BioF_aminotrans_2"/>
    <property type="match status" value="1"/>
</dbReference>
<dbReference type="InterPro" id="IPR001917">
    <property type="entry name" value="Aminotrans_II_pyridoxalP_BS"/>
</dbReference>
<dbReference type="InterPro" id="IPR004839">
    <property type="entry name" value="Aminotransferase_I/II_large"/>
</dbReference>
<dbReference type="InterPro" id="IPR050087">
    <property type="entry name" value="AON_synthase_class-II"/>
</dbReference>
<dbReference type="InterPro" id="IPR004723">
    <property type="entry name" value="AONS_Archaea/Proteobacteria"/>
</dbReference>
<dbReference type="InterPro" id="IPR022834">
    <property type="entry name" value="AONS_Proteobacteria"/>
</dbReference>
<dbReference type="InterPro" id="IPR015424">
    <property type="entry name" value="PyrdxlP-dep_Trfase"/>
</dbReference>
<dbReference type="InterPro" id="IPR015421">
    <property type="entry name" value="PyrdxlP-dep_Trfase_major"/>
</dbReference>
<dbReference type="InterPro" id="IPR015422">
    <property type="entry name" value="PyrdxlP-dep_Trfase_small"/>
</dbReference>
<dbReference type="NCBIfam" id="TIGR00858">
    <property type="entry name" value="bioF"/>
    <property type="match status" value="1"/>
</dbReference>
<dbReference type="PANTHER" id="PTHR13693:SF100">
    <property type="entry name" value="8-AMINO-7-OXONONANOATE SYNTHASE"/>
    <property type="match status" value="1"/>
</dbReference>
<dbReference type="PANTHER" id="PTHR13693">
    <property type="entry name" value="CLASS II AMINOTRANSFERASE/8-AMINO-7-OXONONANOATE SYNTHASE"/>
    <property type="match status" value="1"/>
</dbReference>
<dbReference type="Pfam" id="PF00155">
    <property type="entry name" value="Aminotran_1_2"/>
    <property type="match status" value="1"/>
</dbReference>
<dbReference type="SUPFAM" id="SSF53383">
    <property type="entry name" value="PLP-dependent transferases"/>
    <property type="match status" value="1"/>
</dbReference>
<dbReference type="PROSITE" id="PS00599">
    <property type="entry name" value="AA_TRANSFER_CLASS_2"/>
    <property type="match status" value="1"/>
</dbReference>
<keyword id="KW-0093">Biotin biosynthesis</keyword>
<keyword id="KW-0663">Pyridoxal phosphate</keyword>
<keyword id="KW-0808">Transferase</keyword>
<gene>
    <name evidence="1" type="primary">bioF</name>
    <name type="ordered locus">VS_2039</name>
</gene>
<reference key="1">
    <citation type="submission" date="2009-02" db="EMBL/GenBank/DDBJ databases">
        <title>Vibrio splendidus str. LGP32 complete genome.</title>
        <authorList>
            <person name="Mazel D."/>
            <person name="Le Roux F."/>
        </authorList>
    </citation>
    <scope>NUCLEOTIDE SEQUENCE [LARGE SCALE GENOMIC DNA]</scope>
    <source>
        <strain>LGP32</strain>
    </source>
</reference>
<name>BIOF_VIBA3</name>
<proteinExistence type="inferred from homology"/>
<feature type="chain" id="PRO_0000381137" description="8-amino-7-oxononanoate synthase">
    <location>
        <begin position="1"/>
        <end position="403"/>
    </location>
</feature>
<feature type="region of interest" description="Disordered" evidence="2">
    <location>
        <begin position="383"/>
        <end position="403"/>
    </location>
</feature>
<feature type="compositionally biased region" description="Polar residues" evidence="2">
    <location>
        <begin position="385"/>
        <end position="394"/>
    </location>
</feature>
<feature type="binding site" evidence="1">
    <location>
        <position position="22"/>
    </location>
    <ligand>
        <name>substrate</name>
    </ligand>
</feature>
<feature type="binding site" evidence="1">
    <location>
        <begin position="109"/>
        <end position="110"/>
    </location>
    <ligand>
        <name>pyridoxal 5'-phosphate</name>
        <dbReference type="ChEBI" id="CHEBI:597326"/>
    </ligand>
</feature>
<feature type="binding site" evidence="1">
    <location>
        <position position="134"/>
    </location>
    <ligand>
        <name>substrate</name>
    </ligand>
</feature>
<feature type="binding site" evidence="1">
    <location>
        <position position="178"/>
    </location>
    <ligand>
        <name>pyridoxal 5'-phosphate</name>
        <dbReference type="ChEBI" id="CHEBI:597326"/>
    </ligand>
</feature>
<feature type="binding site" evidence="1">
    <location>
        <position position="206"/>
    </location>
    <ligand>
        <name>pyridoxal 5'-phosphate</name>
        <dbReference type="ChEBI" id="CHEBI:597326"/>
    </ligand>
</feature>
<feature type="binding site" evidence="1">
    <location>
        <position position="232"/>
    </location>
    <ligand>
        <name>pyridoxal 5'-phosphate</name>
        <dbReference type="ChEBI" id="CHEBI:597326"/>
    </ligand>
</feature>
<feature type="binding site" evidence="1">
    <location>
        <position position="348"/>
    </location>
    <ligand>
        <name>substrate</name>
    </ligand>
</feature>
<feature type="modified residue" description="N6-(pyridoxal phosphate)lysine" evidence="1">
    <location>
        <position position="235"/>
    </location>
</feature>